<organism>
    <name type="scientific">Schizosaccharomyces pombe (strain 972 / ATCC 24843)</name>
    <name type="common">Fission yeast</name>
    <dbReference type="NCBI Taxonomy" id="284812"/>
    <lineage>
        <taxon>Eukaryota</taxon>
        <taxon>Fungi</taxon>
        <taxon>Dikarya</taxon>
        <taxon>Ascomycota</taxon>
        <taxon>Taphrinomycotina</taxon>
        <taxon>Schizosaccharomycetes</taxon>
        <taxon>Schizosaccharomycetales</taxon>
        <taxon>Schizosaccharomycetaceae</taxon>
        <taxon>Schizosaccharomyces</taxon>
    </lineage>
</organism>
<sequence>MKPNTTNLRNECWDTFSIPKRSQNIKINQSTKHQRSISDFVGTAGPGRQVGNWIIKKTIGAGSMGKVKLVVNILTGEKAALKMIPFTPNNTSQTVRVQREALLGRLLRHPNICRVIDCIRTPACTYILFEYVPGGQLLEYILARGKLDEDLARSFAMQLINALVYLHKNFIVHRDLKIENVLLTQDSRQVKLIDFGLSNFYSKDDLLRTYCGSLYFAAPELLDAKPYIGPEVDVWSLGVVIYVMVCGRVPFDDVSVPMLHSKIKSGKLEFPSYISEDCCSLIAAMLNVNPRKRCSLEQAAKFPWLKKNSFCLYLPIPLTSIPSTPSIRSHVFKPPFNLKVLQLLHEHGLASIPELKHELYMAYIERKTTSLVCLYLLGVESLAPALRIPTALPPVYSRHQRHHSEILGAMDLTEKITAMQCPP</sequence>
<name>PPK25_SCHPO</name>
<feature type="chain" id="PRO_0000256824" description="Serine/threonine-protein kinase ppk25">
    <location>
        <begin position="1"/>
        <end position="423"/>
    </location>
</feature>
<feature type="domain" description="Protein kinase" evidence="1">
    <location>
        <begin position="53"/>
        <end position="305"/>
    </location>
</feature>
<feature type="active site" description="Proton acceptor" evidence="1 2">
    <location>
        <position position="175"/>
    </location>
</feature>
<feature type="binding site" evidence="1">
    <location>
        <begin position="59"/>
        <end position="67"/>
    </location>
    <ligand>
        <name>ATP</name>
        <dbReference type="ChEBI" id="CHEBI:30616"/>
    </ligand>
</feature>
<feature type="binding site" evidence="1">
    <location>
        <position position="82"/>
    </location>
    <ligand>
        <name>ATP</name>
        <dbReference type="ChEBI" id="CHEBI:30616"/>
    </ligand>
</feature>
<feature type="modified residue" description="Phosphoserine" evidence="4">
    <location>
        <position position="36"/>
    </location>
</feature>
<feature type="modified residue" description="Phosphoserine" evidence="4">
    <location>
        <position position="38"/>
    </location>
</feature>
<dbReference type="EC" id="2.7.11.1"/>
<dbReference type="EMBL" id="CU329671">
    <property type="protein sequence ID" value="CAA18163.1"/>
    <property type="molecule type" value="Genomic_DNA"/>
</dbReference>
<dbReference type="PIR" id="T40224">
    <property type="entry name" value="T40224"/>
</dbReference>
<dbReference type="RefSeq" id="NP_596657.1">
    <property type="nucleotide sequence ID" value="NM_001022579.2"/>
</dbReference>
<dbReference type="SMR" id="O59697"/>
<dbReference type="BioGRID" id="276798">
    <property type="interactions" value="8"/>
</dbReference>
<dbReference type="FunCoup" id="O59697">
    <property type="interactions" value="69"/>
</dbReference>
<dbReference type="STRING" id="284812.O59697"/>
<dbReference type="iPTMnet" id="O59697"/>
<dbReference type="PaxDb" id="4896-SPBC32C12.03c.1"/>
<dbReference type="EnsemblFungi" id="SPBC32C12.03c.1">
    <property type="protein sequence ID" value="SPBC32C12.03c.1:pep"/>
    <property type="gene ID" value="SPBC32C12.03c"/>
</dbReference>
<dbReference type="GeneID" id="2540267"/>
<dbReference type="KEGG" id="spo:2540267"/>
<dbReference type="PomBase" id="SPBC32C12.03c">
    <property type="gene designation" value="ppk25"/>
</dbReference>
<dbReference type="VEuPathDB" id="FungiDB:SPBC32C12.03c"/>
<dbReference type="eggNOG" id="KOG0583">
    <property type="taxonomic scope" value="Eukaryota"/>
</dbReference>
<dbReference type="HOGENOM" id="CLU_053577_0_0_1"/>
<dbReference type="InParanoid" id="O59697"/>
<dbReference type="OMA" id="GKLCDNT"/>
<dbReference type="PhylomeDB" id="O59697"/>
<dbReference type="Reactome" id="R-SPO-1632852">
    <property type="pathway name" value="Macroautophagy"/>
</dbReference>
<dbReference type="Reactome" id="R-SPO-380972">
    <property type="pathway name" value="Energy dependent regulation of mTOR by LKB1-AMPK"/>
</dbReference>
<dbReference type="Reactome" id="R-SPO-5628897">
    <property type="pathway name" value="TP53 Regulates Metabolic Genes"/>
</dbReference>
<dbReference type="PRO" id="PR:O59697"/>
<dbReference type="Proteomes" id="UP000002485">
    <property type="component" value="Chromosome II"/>
</dbReference>
<dbReference type="GO" id="GO:0005737">
    <property type="term" value="C:cytoplasm"/>
    <property type="evidence" value="ECO:0000314"/>
    <property type="project" value="PomBase"/>
</dbReference>
<dbReference type="GO" id="GO:0005829">
    <property type="term" value="C:cytosol"/>
    <property type="evidence" value="ECO:0007005"/>
    <property type="project" value="PomBase"/>
</dbReference>
<dbReference type="GO" id="GO:0005524">
    <property type="term" value="F:ATP binding"/>
    <property type="evidence" value="ECO:0000255"/>
    <property type="project" value="PomBase"/>
</dbReference>
<dbReference type="GO" id="GO:0106310">
    <property type="term" value="F:protein serine kinase activity"/>
    <property type="evidence" value="ECO:0007669"/>
    <property type="project" value="RHEA"/>
</dbReference>
<dbReference type="GO" id="GO:0004674">
    <property type="term" value="F:protein serine/threonine kinase activity"/>
    <property type="evidence" value="ECO:0000318"/>
    <property type="project" value="GO_Central"/>
</dbReference>
<dbReference type="GO" id="GO:0007165">
    <property type="term" value="P:signal transduction"/>
    <property type="evidence" value="ECO:0000303"/>
    <property type="project" value="PomBase"/>
</dbReference>
<dbReference type="CDD" id="cd14077">
    <property type="entry name" value="STKc_Kin1_2"/>
    <property type="match status" value="1"/>
</dbReference>
<dbReference type="FunFam" id="1.10.510.10:FF:001222">
    <property type="entry name" value="Serine/threonine-protein kinase ppk25"/>
    <property type="match status" value="1"/>
</dbReference>
<dbReference type="Gene3D" id="1.10.510.10">
    <property type="entry name" value="Transferase(Phosphotransferase) domain 1"/>
    <property type="match status" value="1"/>
</dbReference>
<dbReference type="InterPro" id="IPR011009">
    <property type="entry name" value="Kinase-like_dom_sf"/>
</dbReference>
<dbReference type="InterPro" id="IPR000719">
    <property type="entry name" value="Prot_kinase_dom"/>
</dbReference>
<dbReference type="InterPro" id="IPR017441">
    <property type="entry name" value="Protein_kinase_ATP_BS"/>
</dbReference>
<dbReference type="InterPro" id="IPR008271">
    <property type="entry name" value="Ser/Thr_kinase_AS"/>
</dbReference>
<dbReference type="PANTHER" id="PTHR24346:SF82">
    <property type="entry name" value="KP78A-RELATED"/>
    <property type="match status" value="1"/>
</dbReference>
<dbReference type="PANTHER" id="PTHR24346">
    <property type="entry name" value="MAP/MICROTUBULE AFFINITY-REGULATING KINASE"/>
    <property type="match status" value="1"/>
</dbReference>
<dbReference type="Pfam" id="PF00069">
    <property type="entry name" value="Pkinase"/>
    <property type="match status" value="1"/>
</dbReference>
<dbReference type="SMART" id="SM00220">
    <property type="entry name" value="S_TKc"/>
    <property type="match status" value="1"/>
</dbReference>
<dbReference type="SUPFAM" id="SSF56112">
    <property type="entry name" value="Protein kinase-like (PK-like)"/>
    <property type="match status" value="1"/>
</dbReference>
<dbReference type="PROSITE" id="PS00107">
    <property type="entry name" value="PROTEIN_KINASE_ATP"/>
    <property type="match status" value="1"/>
</dbReference>
<dbReference type="PROSITE" id="PS50011">
    <property type="entry name" value="PROTEIN_KINASE_DOM"/>
    <property type="match status" value="1"/>
</dbReference>
<dbReference type="PROSITE" id="PS00108">
    <property type="entry name" value="PROTEIN_KINASE_ST"/>
    <property type="match status" value="1"/>
</dbReference>
<accession>O59697</accession>
<evidence type="ECO:0000255" key="1">
    <source>
        <dbReference type="PROSITE-ProRule" id="PRU00159"/>
    </source>
</evidence>
<evidence type="ECO:0000255" key="2">
    <source>
        <dbReference type="PROSITE-ProRule" id="PRU10027"/>
    </source>
</evidence>
<evidence type="ECO:0000269" key="3">
    <source>
    </source>
</evidence>
<evidence type="ECO:0000269" key="4">
    <source>
    </source>
</evidence>
<proteinExistence type="evidence at protein level"/>
<reference key="1">
    <citation type="journal article" date="2002" name="Nature">
        <title>The genome sequence of Schizosaccharomyces pombe.</title>
        <authorList>
            <person name="Wood V."/>
            <person name="Gwilliam R."/>
            <person name="Rajandream M.A."/>
            <person name="Lyne M.H."/>
            <person name="Lyne R."/>
            <person name="Stewart A."/>
            <person name="Sgouros J.G."/>
            <person name="Peat N."/>
            <person name="Hayles J."/>
            <person name="Baker S.G."/>
            <person name="Basham D."/>
            <person name="Bowman S."/>
            <person name="Brooks K."/>
            <person name="Brown D."/>
            <person name="Brown S."/>
            <person name="Chillingworth T."/>
            <person name="Churcher C.M."/>
            <person name="Collins M."/>
            <person name="Connor R."/>
            <person name="Cronin A."/>
            <person name="Davis P."/>
            <person name="Feltwell T."/>
            <person name="Fraser A."/>
            <person name="Gentles S."/>
            <person name="Goble A."/>
            <person name="Hamlin N."/>
            <person name="Harris D.E."/>
            <person name="Hidalgo J."/>
            <person name="Hodgson G."/>
            <person name="Holroyd S."/>
            <person name="Hornsby T."/>
            <person name="Howarth S."/>
            <person name="Huckle E.J."/>
            <person name="Hunt S."/>
            <person name="Jagels K."/>
            <person name="James K.D."/>
            <person name="Jones L."/>
            <person name="Jones M."/>
            <person name="Leather S."/>
            <person name="McDonald S."/>
            <person name="McLean J."/>
            <person name="Mooney P."/>
            <person name="Moule S."/>
            <person name="Mungall K.L."/>
            <person name="Murphy L.D."/>
            <person name="Niblett D."/>
            <person name="Odell C."/>
            <person name="Oliver K."/>
            <person name="O'Neil S."/>
            <person name="Pearson D."/>
            <person name="Quail M.A."/>
            <person name="Rabbinowitsch E."/>
            <person name="Rutherford K.M."/>
            <person name="Rutter S."/>
            <person name="Saunders D."/>
            <person name="Seeger K."/>
            <person name="Sharp S."/>
            <person name="Skelton J."/>
            <person name="Simmonds M.N."/>
            <person name="Squares R."/>
            <person name="Squares S."/>
            <person name="Stevens K."/>
            <person name="Taylor K."/>
            <person name="Taylor R.G."/>
            <person name="Tivey A."/>
            <person name="Walsh S.V."/>
            <person name="Warren T."/>
            <person name="Whitehead S."/>
            <person name="Woodward J.R."/>
            <person name="Volckaert G."/>
            <person name="Aert R."/>
            <person name="Robben J."/>
            <person name="Grymonprez B."/>
            <person name="Weltjens I."/>
            <person name="Vanstreels E."/>
            <person name="Rieger M."/>
            <person name="Schaefer M."/>
            <person name="Mueller-Auer S."/>
            <person name="Gabel C."/>
            <person name="Fuchs M."/>
            <person name="Duesterhoeft A."/>
            <person name="Fritzc C."/>
            <person name="Holzer E."/>
            <person name="Moestl D."/>
            <person name="Hilbert H."/>
            <person name="Borzym K."/>
            <person name="Langer I."/>
            <person name="Beck A."/>
            <person name="Lehrach H."/>
            <person name="Reinhardt R."/>
            <person name="Pohl T.M."/>
            <person name="Eger P."/>
            <person name="Zimmermann W."/>
            <person name="Wedler H."/>
            <person name="Wambutt R."/>
            <person name="Purnelle B."/>
            <person name="Goffeau A."/>
            <person name="Cadieu E."/>
            <person name="Dreano S."/>
            <person name="Gloux S."/>
            <person name="Lelaure V."/>
            <person name="Mottier S."/>
            <person name="Galibert F."/>
            <person name="Aves S.J."/>
            <person name="Xiang Z."/>
            <person name="Hunt C."/>
            <person name="Moore K."/>
            <person name="Hurst S.M."/>
            <person name="Lucas M."/>
            <person name="Rochet M."/>
            <person name="Gaillardin C."/>
            <person name="Tallada V.A."/>
            <person name="Garzon A."/>
            <person name="Thode G."/>
            <person name="Daga R.R."/>
            <person name="Cruzado L."/>
            <person name="Jimenez J."/>
            <person name="Sanchez M."/>
            <person name="del Rey F."/>
            <person name="Benito J."/>
            <person name="Dominguez A."/>
            <person name="Revuelta J.L."/>
            <person name="Moreno S."/>
            <person name="Armstrong J."/>
            <person name="Forsburg S.L."/>
            <person name="Cerutti L."/>
            <person name="Lowe T."/>
            <person name="McCombie W.R."/>
            <person name="Paulsen I."/>
            <person name="Potashkin J."/>
            <person name="Shpakovski G.V."/>
            <person name="Ussery D."/>
            <person name="Barrell B.G."/>
            <person name="Nurse P."/>
        </authorList>
    </citation>
    <scope>NUCLEOTIDE SEQUENCE [LARGE SCALE GENOMIC DNA]</scope>
    <source>
        <strain>972 / ATCC 24843</strain>
    </source>
</reference>
<reference key="2">
    <citation type="journal article" date="2005" name="Eukaryot. Cell">
        <title>Systematic deletion analysis of fission yeast protein kinases.</title>
        <authorList>
            <person name="Bimbo A."/>
            <person name="Jia Y."/>
            <person name="Poh S.L."/>
            <person name="Karuturi R.K.M."/>
            <person name="den Elzen N."/>
            <person name="Peng X."/>
            <person name="Zheng L."/>
            <person name="O'Connell M."/>
            <person name="Liu E.T."/>
            <person name="Balasubramanian M.K."/>
            <person name="Liu J."/>
        </authorList>
    </citation>
    <scope>IDENTIFICATION</scope>
</reference>
<reference key="3">
    <citation type="journal article" date="2006" name="Nat. Biotechnol.">
        <title>ORFeome cloning and global analysis of protein localization in the fission yeast Schizosaccharomyces pombe.</title>
        <authorList>
            <person name="Matsuyama A."/>
            <person name="Arai R."/>
            <person name="Yashiroda Y."/>
            <person name="Shirai A."/>
            <person name="Kamata A."/>
            <person name="Sekido S."/>
            <person name="Kobayashi Y."/>
            <person name="Hashimoto A."/>
            <person name="Hamamoto M."/>
            <person name="Hiraoka Y."/>
            <person name="Horinouchi S."/>
            <person name="Yoshida M."/>
        </authorList>
    </citation>
    <scope>SUBCELLULAR LOCATION [LARGE SCALE ANALYSIS]</scope>
</reference>
<reference key="4">
    <citation type="journal article" date="2008" name="J. Proteome Res.">
        <title>Phosphoproteome analysis of fission yeast.</title>
        <authorList>
            <person name="Wilson-Grady J.T."/>
            <person name="Villen J."/>
            <person name="Gygi S.P."/>
        </authorList>
    </citation>
    <scope>PHOSPHORYLATION [LARGE SCALE ANALYSIS] AT SER-36 AND SER-38</scope>
    <scope>IDENTIFICATION BY MASS SPECTROMETRY</scope>
</reference>
<comment type="catalytic activity">
    <reaction>
        <text>L-seryl-[protein] + ATP = O-phospho-L-seryl-[protein] + ADP + H(+)</text>
        <dbReference type="Rhea" id="RHEA:17989"/>
        <dbReference type="Rhea" id="RHEA-COMP:9863"/>
        <dbReference type="Rhea" id="RHEA-COMP:11604"/>
        <dbReference type="ChEBI" id="CHEBI:15378"/>
        <dbReference type="ChEBI" id="CHEBI:29999"/>
        <dbReference type="ChEBI" id="CHEBI:30616"/>
        <dbReference type="ChEBI" id="CHEBI:83421"/>
        <dbReference type="ChEBI" id="CHEBI:456216"/>
        <dbReference type="EC" id="2.7.11.1"/>
    </reaction>
</comment>
<comment type="catalytic activity">
    <reaction>
        <text>L-threonyl-[protein] + ATP = O-phospho-L-threonyl-[protein] + ADP + H(+)</text>
        <dbReference type="Rhea" id="RHEA:46608"/>
        <dbReference type="Rhea" id="RHEA-COMP:11060"/>
        <dbReference type="Rhea" id="RHEA-COMP:11605"/>
        <dbReference type="ChEBI" id="CHEBI:15378"/>
        <dbReference type="ChEBI" id="CHEBI:30013"/>
        <dbReference type="ChEBI" id="CHEBI:30616"/>
        <dbReference type="ChEBI" id="CHEBI:61977"/>
        <dbReference type="ChEBI" id="CHEBI:456216"/>
        <dbReference type="EC" id="2.7.11.1"/>
    </reaction>
</comment>
<comment type="subcellular location">
    <subcellularLocation>
        <location evidence="3">Cytoplasm</location>
    </subcellularLocation>
</comment>
<comment type="similarity">
    <text evidence="1">Belongs to the protein kinase superfamily. Ser/Thr protein kinase family.</text>
</comment>
<protein>
    <recommendedName>
        <fullName>Serine/threonine-protein kinase ppk25</fullName>
        <ecNumber>2.7.11.1</ecNumber>
    </recommendedName>
</protein>
<gene>
    <name type="primary">ppk25</name>
    <name type="ORF">SPBC32C12.03c</name>
</gene>
<keyword id="KW-0067">ATP-binding</keyword>
<keyword id="KW-0963">Cytoplasm</keyword>
<keyword id="KW-0418">Kinase</keyword>
<keyword id="KW-0547">Nucleotide-binding</keyword>
<keyword id="KW-0597">Phosphoprotein</keyword>
<keyword id="KW-1185">Reference proteome</keyword>
<keyword id="KW-0723">Serine/threonine-protein kinase</keyword>
<keyword id="KW-0808">Transferase</keyword>